<organism>
    <name type="scientific">Flavobacterium psychrophilum (strain ATCC 49511 / DSM 21280 / CIP 103535 / JIP02/86)</name>
    <dbReference type="NCBI Taxonomy" id="402612"/>
    <lineage>
        <taxon>Bacteria</taxon>
        <taxon>Pseudomonadati</taxon>
        <taxon>Bacteroidota</taxon>
        <taxon>Flavobacteriia</taxon>
        <taxon>Flavobacteriales</taxon>
        <taxon>Flavobacteriaceae</taxon>
        <taxon>Flavobacterium</taxon>
    </lineage>
</organism>
<proteinExistence type="inferred from homology"/>
<evidence type="ECO:0000255" key="1">
    <source>
        <dbReference type="HAMAP-Rule" id="MF_00605"/>
    </source>
</evidence>
<name>TRMD_FLAPJ</name>
<comment type="function">
    <text evidence="1">Specifically methylates guanosine-37 in various tRNAs.</text>
</comment>
<comment type="catalytic activity">
    <reaction evidence="1">
        <text>guanosine(37) in tRNA + S-adenosyl-L-methionine = N(1)-methylguanosine(37) in tRNA + S-adenosyl-L-homocysteine + H(+)</text>
        <dbReference type="Rhea" id="RHEA:36899"/>
        <dbReference type="Rhea" id="RHEA-COMP:10145"/>
        <dbReference type="Rhea" id="RHEA-COMP:10147"/>
        <dbReference type="ChEBI" id="CHEBI:15378"/>
        <dbReference type="ChEBI" id="CHEBI:57856"/>
        <dbReference type="ChEBI" id="CHEBI:59789"/>
        <dbReference type="ChEBI" id="CHEBI:73542"/>
        <dbReference type="ChEBI" id="CHEBI:74269"/>
        <dbReference type="EC" id="2.1.1.228"/>
    </reaction>
</comment>
<comment type="subunit">
    <text evidence="1">Homodimer.</text>
</comment>
<comment type="subcellular location">
    <subcellularLocation>
        <location evidence="1">Cytoplasm</location>
    </subcellularLocation>
</comment>
<comment type="similarity">
    <text evidence="1">Belongs to the RNA methyltransferase TrmD family.</text>
</comment>
<accession>A6H0R6</accession>
<reference key="1">
    <citation type="journal article" date="2007" name="Nat. Biotechnol.">
        <title>Complete genome sequence of the fish pathogen Flavobacterium psychrophilum.</title>
        <authorList>
            <person name="Duchaud E."/>
            <person name="Boussaha M."/>
            <person name="Loux V."/>
            <person name="Bernardet J.-F."/>
            <person name="Michel C."/>
            <person name="Kerouault B."/>
            <person name="Mondot S."/>
            <person name="Nicolas P."/>
            <person name="Bossy R."/>
            <person name="Caron C."/>
            <person name="Bessieres P."/>
            <person name="Gibrat J.-F."/>
            <person name="Claverol S."/>
            <person name="Dumetz F."/>
            <person name="Le Henaff M."/>
            <person name="Benmansour A."/>
        </authorList>
    </citation>
    <scope>NUCLEOTIDE SEQUENCE [LARGE SCALE GENOMIC DNA]</scope>
    <source>
        <strain>ATCC 49511 / DSM 21280 / CIP 103535 / JIP02/86</strain>
    </source>
</reference>
<keyword id="KW-0963">Cytoplasm</keyword>
<keyword id="KW-0489">Methyltransferase</keyword>
<keyword id="KW-1185">Reference proteome</keyword>
<keyword id="KW-0949">S-adenosyl-L-methionine</keyword>
<keyword id="KW-0808">Transferase</keyword>
<keyword id="KW-0819">tRNA processing</keyword>
<sequence length="225" mass="25459">MRIDIITILPELLRSPFEASIMKRAIDKGLVEVYFHNLRDYTTNKQKSVDDYPFGGGAGMVMNVQPIDDCITHLKSERTYDEVIYMTPDGETLNQKMTNSMSLLGNIIILCGHYKGVDQRVRDHFITREISIGDYVLSGGELGALVLCDALIRLIPGVLSDETSALTDSFQDNLLSGPIYTRPADYKGWKVPEVLTSGHFAKIDKWREDMAYEHTKNRRPDLLDN</sequence>
<dbReference type="EC" id="2.1.1.228" evidence="1"/>
<dbReference type="EMBL" id="AM398681">
    <property type="protein sequence ID" value="CAL43940.1"/>
    <property type="molecule type" value="Genomic_DNA"/>
</dbReference>
<dbReference type="RefSeq" id="WP_011963979.1">
    <property type="nucleotide sequence ID" value="NC_009613.3"/>
</dbReference>
<dbReference type="RefSeq" id="YP_001296743.1">
    <property type="nucleotide sequence ID" value="NC_009613.3"/>
</dbReference>
<dbReference type="SMR" id="A6H0R6"/>
<dbReference type="STRING" id="402612.FP1874"/>
<dbReference type="EnsemblBacteria" id="CAL43940">
    <property type="protein sequence ID" value="CAL43940"/>
    <property type="gene ID" value="FP1874"/>
</dbReference>
<dbReference type="GeneID" id="66551942"/>
<dbReference type="KEGG" id="fps:FP1874"/>
<dbReference type="PATRIC" id="fig|402612.5.peg.1900"/>
<dbReference type="eggNOG" id="COG0336">
    <property type="taxonomic scope" value="Bacteria"/>
</dbReference>
<dbReference type="HOGENOM" id="CLU_047363_0_1_10"/>
<dbReference type="OrthoDB" id="9807416at2"/>
<dbReference type="Proteomes" id="UP000006394">
    <property type="component" value="Chromosome"/>
</dbReference>
<dbReference type="GO" id="GO:0005829">
    <property type="term" value="C:cytosol"/>
    <property type="evidence" value="ECO:0007669"/>
    <property type="project" value="TreeGrafter"/>
</dbReference>
<dbReference type="GO" id="GO:0052906">
    <property type="term" value="F:tRNA (guanine(37)-N1)-methyltransferase activity"/>
    <property type="evidence" value="ECO:0007669"/>
    <property type="project" value="UniProtKB-UniRule"/>
</dbReference>
<dbReference type="GO" id="GO:0002939">
    <property type="term" value="P:tRNA N1-guanine methylation"/>
    <property type="evidence" value="ECO:0007669"/>
    <property type="project" value="TreeGrafter"/>
</dbReference>
<dbReference type="CDD" id="cd18080">
    <property type="entry name" value="TrmD-like"/>
    <property type="match status" value="1"/>
</dbReference>
<dbReference type="FunFam" id="3.40.1280.10:FF:000001">
    <property type="entry name" value="tRNA (guanine-N(1)-)-methyltransferase"/>
    <property type="match status" value="1"/>
</dbReference>
<dbReference type="Gene3D" id="3.40.1280.10">
    <property type="match status" value="1"/>
</dbReference>
<dbReference type="Gene3D" id="1.10.1270.20">
    <property type="entry name" value="tRNA(m1g37)methyltransferase, domain 2"/>
    <property type="match status" value="1"/>
</dbReference>
<dbReference type="HAMAP" id="MF_00605">
    <property type="entry name" value="TrmD"/>
    <property type="match status" value="1"/>
</dbReference>
<dbReference type="InterPro" id="IPR029028">
    <property type="entry name" value="Alpha/beta_knot_MTases"/>
</dbReference>
<dbReference type="InterPro" id="IPR023148">
    <property type="entry name" value="tRNA_m1G_MeTrfase_C_sf"/>
</dbReference>
<dbReference type="InterPro" id="IPR002649">
    <property type="entry name" value="tRNA_m1G_MeTrfase_TrmD"/>
</dbReference>
<dbReference type="InterPro" id="IPR029026">
    <property type="entry name" value="tRNA_m1G_MTases_N"/>
</dbReference>
<dbReference type="InterPro" id="IPR016009">
    <property type="entry name" value="tRNA_MeTrfase_TRMD/TRM10"/>
</dbReference>
<dbReference type="NCBIfam" id="NF000648">
    <property type="entry name" value="PRK00026.1"/>
    <property type="match status" value="1"/>
</dbReference>
<dbReference type="NCBIfam" id="TIGR00088">
    <property type="entry name" value="trmD"/>
    <property type="match status" value="1"/>
</dbReference>
<dbReference type="PANTHER" id="PTHR46417">
    <property type="entry name" value="TRNA (GUANINE-N(1)-)-METHYLTRANSFERASE"/>
    <property type="match status" value="1"/>
</dbReference>
<dbReference type="PANTHER" id="PTHR46417:SF1">
    <property type="entry name" value="TRNA (GUANINE-N(1)-)-METHYLTRANSFERASE"/>
    <property type="match status" value="1"/>
</dbReference>
<dbReference type="Pfam" id="PF01746">
    <property type="entry name" value="tRNA_m1G_MT"/>
    <property type="match status" value="1"/>
</dbReference>
<dbReference type="PIRSF" id="PIRSF000386">
    <property type="entry name" value="tRNA_mtase"/>
    <property type="match status" value="1"/>
</dbReference>
<dbReference type="SUPFAM" id="SSF75217">
    <property type="entry name" value="alpha/beta knot"/>
    <property type="match status" value="1"/>
</dbReference>
<gene>
    <name evidence="1" type="primary">trmD</name>
    <name type="ordered locus">FP1874</name>
</gene>
<feature type="chain" id="PRO_1000006475" description="tRNA (guanine-N(1)-)-methyltransferase">
    <location>
        <begin position="1"/>
        <end position="225"/>
    </location>
</feature>
<feature type="binding site" evidence="1">
    <location>
        <position position="112"/>
    </location>
    <ligand>
        <name>S-adenosyl-L-methionine</name>
        <dbReference type="ChEBI" id="CHEBI:59789"/>
    </ligand>
</feature>
<feature type="binding site" evidence="1">
    <location>
        <begin position="132"/>
        <end position="137"/>
    </location>
    <ligand>
        <name>S-adenosyl-L-methionine</name>
        <dbReference type="ChEBI" id="CHEBI:59789"/>
    </ligand>
</feature>
<protein>
    <recommendedName>
        <fullName evidence="1">tRNA (guanine-N(1)-)-methyltransferase</fullName>
        <ecNumber evidence="1">2.1.1.228</ecNumber>
    </recommendedName>
    <alternativeName>
        <fullName evidence="1">M1G-methyltransferase</fullName>
    </alternativeName>
    <alternativeName>
        <fullName evidence="1">tRNA [GM37] methyltransferase</fullName>
    </alternativeName>
</protein>